<keyword id="KW-0067">ATP-binding</keyword>
<keyword id="KW-0418">Kinase</keyword>
<keyword id="KW-0460">Magnesium</keyword>
<keyword id="KW-0479">Metal-binding</keyword>
<keyword id="KW-0547">Nucleotide-binding</keyword>
<keyword id="KW-0784">Thiamine biosynthesis</keyword>
<keyword id="KW-0808">Transferase</keyword>
<gene>
    <name evidence="1" type="primary">thiM</name>
    <name type="ordered locus">A1S_2095</name>
</gene>
<sequence>MTSTSNLIEQVIEAWQNMQAKTPLVQCITNSVAANYTANVLLASGASPAMIDNPYEAESFTKISSALSINLGTPTSEQMQAMQISAKTAQLNNVPWVLDPVGYGPILAWRSQMTDELLQFKPSVIRGNASEISTLAGNQVQSKGVDSTLSSDQAYQQAFSLLTHASCIAISGESDYILSNEVDAVIQVNGGSPLQPKITATGCALGALIAAYSAVTTPTIAALSAHIHFAIAGKLAANQAQTMGSFSSIFMDYIHMLDANLIEQYADIKLLNKQA</sequence>
<comment type="function">
    <text evidence="1">Catalyzes the phosphorylation of the hydroxyl group of 4-methyl-5-beta-hydroxyethylthiazole (THZ).</text>
</comment>
<comment type="catalytic activity">
    <reaction evidence="1">
        <text>5-(2-hydroxyethyl)-4-methylthiazole + ATP = 4-methyl-5-(2-phosphooxyethyl)-thiazole + ADP + H(+)</text>
        <dbReference type="Rhea" id="RHEA:24212"/>
        <dbReference type="ChEBI" id="CHEBI:15378"/>
        <dbReference type="ChEBI" id="CHEBI:17957"/>
        <dbReference type="ChEBI" id="CHEBI:30616"/>
        <dbReference type="ChEBI" id="CHEBI:58296"/>
        <dbReference type="ChEBI" id="CHEBI:456216"/>
        <dbReference type="EC" id="2.7.1.50"/>
    </reaction>
</comment>
<comment type="cofactor">
    <cofactor evidence="1">
        <name>Mg(2+)</name>
        <dbReference type="ChEBI" id="CHEBI:18420"/>
    </cofactor>
</comment>
<comment type="pathway">
    <text evidence="1">Cofactor biosynthesis; thiamine diphosphate biosynthesis; 4-methyl-5-(2-phosphoethyl)-thiazole from 5-(2-hydroxyethyl)-4-methylthiazole: step 1/1.</text>
</comment>
<comment type="similarity">
    <text evidence="1">Belongs to the Thz kinase family.</text>
</comment>
<accession>A3M6H8</accession>
<proteinExistence type="inferred from homology"/>
<organism>
    <name type="scientific">Acinetobacter baumannii (strain ATCC 17978 / DSM 105126 / CIP 53.77 / LMG 1025 / NCDC KC755 / 5377)</name>
    <dbReference type="NCBI Taxonomy" id="400667"/>
    <lineage>
        <taxon>Bacteria</taxon>
        <taxon>Pseudomonadati</taxon>
        <taxon>Pseudomonadota</taxon>
        <taxon>Gammaproteobacteria</taxon>
        <taxon>Moraxellales</taxon>
        <taxon>Moraxellaceae</taxon>
        <taxon>Acinetobacter</taxon>
        <taxon>Acinetobacter calcoaceticus/baumannii complex</taxon>
    </lineage>
</organism>
<reference key="1">
    <citation type="journal article" date="2007" name="Genes Dev.">
        <title>New insights into Acinetobacter baumannii pathogenesis revealed by high-density pyrosequencing and transposon mutagenesis.</title>
        <authorList>
            <person name="Smith M.G."/>
            <person name="Gianoulis T.A."/>
            <person name="Pukatzki S."/>
            <person name="Mekalanos J.J."/>
            <person name="Ornston L.N."/>
            <person name="Gerstein M."/>
            <person name="Snyder M."/>
        </authorList>
    </citation>
    <scope>NUCLEOTIDE SEQUENCE [LARGE SCALE GENOMIC DNA]</scope>
    <source>
        <strain>ATCC 17978 / DSM 105126 / CIP 53.77 / LMG 1025 / NCDC KC755 / 5377</strain>
    </source>
</reference>
<name>THIM_ACIBT</name>
<dbReference type="EC" id="2.7.1.50" evidence="1"/>
<dbReference type="EMBL" id="CP000521">
    <property type="protein sequence ID" value="ABO12522.2"/>
    <property type="molecule type" value="Genomic_DNA"/>
</dbReference>
<dbReference type="RefSeq" id="WP_000204871.1">
    <property type="nucleotide sequence ID" value="NZ_CP053098.1"/>
</dbReference>
<dbReference type="SMR" id="A3M6H8"/>
<dbReference type="KEGG" id="acb:A1S_2095"/>
<dbReference type="HOGENOM" id="CLU_019943_0_1_6"/>
<dbReference type="UniPathway" id="UPA00060">
    <property type="reaction ID" value="UER00139"/>
</dbReference>
<dbReference type="GO" id="GO:0005524">
    <property type="term" value="F:ATP binding"/>
    <property type="evidence" value="ECO:0007669"/>
    <property type="project" value="UniProtKB-UniRule"/>
</dbReference>
<dbReference type="GO" id="GO:0004417">
    <property type="term" value="F:hydroxyethylthiazole kinase activity"/>
    <property type="evidence" value="ECO:0007669"/>
    <property type="project" value="UniProtKB-UniRule"/>
</dbReference>
<dbReference type="GO" id="GO:0000287">
    <property type="term" value="F:magnesium ion binding"/>
    <property type="evidence" value="ECO:0007669"/>
    <property type="project" value="UniProtKB-UniRule"/>
</dbReference>
<dbReference type="GO" id="GO:0009228">
    <property type="term" value="P:thiamine biosynthetic process"/>
    <property type="evidence" value="ECO:0007669"/>
    <property type="project" value="UniProtKB-KW"/>
</dbReference>
<dbReference type="GO" id="GO:0009229">
    <property type="term" value="P:thiamine diphosphate biosynthetic process"/>
    <property type="evidence" value="ECO:0007669"/>
    <property type="project" value="UniProtKB-UniRule"/>
</dbReference>
<dbReference type="CDD" id="cd01170">
    <property type="entry name" value="THZ_kinase"/>
    <property type="match status" value="1"/>
</dbReference>
<dbReference type="Gene3D" id="3.40.1190.20">
    <property type="match status" value="1"/>
</dbReference>
<dbReference type="HAMAP" id="MF_00228">
    <property type="entry name" value="Thz_kinase"/>
    <property type="match status" value="1"/>
</dbReference>
<dbReference type="InterPro" id="IPR000417">
    <property type="entry name" value="Hyethyz_kinase"/>
</dbReference>
<dbReference type="InterPro" id="IPR029056">
    <property type="entry name" value="Ribokinase-like"/>
</dbReference>
<dbReference type="NCBIfam" id="NF006830">
    <property type="entry name" value="PRK09355.1"/>
    <property type="match status" value="1"/>
</dbReference>
<dbReference type="Pfam" id="PF02110">
    <property type="entry name" value="HK"/>
    <property type="match status" value="1"/>
</dbReference>
<dbReference type="PIRSF" id="PIRSF000513">
    <property type="entry name" value="Thz_kinase"/>
    <property type="match status" value="1"/>
</dbReference>
<dbReference type="PRINTS" id="PR01099">
    <property type="entry name" value="HYETHTZKNASE"/>
</dbReference>
<dbReference type="SUPFAM" id="SSF53613">
    <property type="entry name" value="Ribokinase-like"/>
    <property type="match status" value="1"/>
</dbReference>
<feature type="chain" id="PRO_0000383813" description="Hydroxyethylthiazole kinase">
    <location>
        <begin position="1"/>
        <end position="275"/>
    </location>
</feature>
<feature type="binding site" evidence="1">
    <location>
        <position position="50"/>
    </location>
    <ligand>
        <name>substrate</name>
    </ligand>
</feature>
<feature type="binding site" evidence="1">
    <location>
        <position position="126"/>
    </location>
    <ligand>
        <name>ATP</name>
        <dbReference type="ChEBI" id="CHEBI:30616"/>
    </ligand>
</feature>
<feature type="binding site" evidence="1">
    <location>
        <position position="171"/>
    </location>
    <ligand>
        <name>ATP</name>
        <dbReference type="ChEBI" id="CHEBI:30616"/>
    </ligand>
</feature>
<feature type="binding site" evidence="1">
    <location>
        <position position="200"/>
    </location>
    <ligand>
        <name>substrate</name>
    </ligand>
</feature>
<evidence type="ECO:0000255" key="1">
    <source>
        <dbReference type="HAMAP-Rule" id="MF_00228"/>
    </source>
</evidence>
<protein>
    <recommendedName>
        <fullName evidence="1">Hydroxyethylthiazole kinase</fullName>
        <ecNumber evidence="1">2.7.1.50</ecNumber>
    </recommendedName>
    <alternativeName>
        <fullName evidence="1">4-methyl-5-beta-hydroxyethylthiazole kinase</fullName>
        <shortName evidence="1">TH kinase</shortName>
        <shortName evidence="1">Thz kinase</shortName>
    </alternativeName>
</protein>